<gene>
    <name evidence="1" type="primary">ruvA</name>
    <name type="ordered locus">Sputcn32_1938</name>
</gene>
<dbReference type="EMBL" id="CP000681">
    <property type="protein sequence ID" value="ABP75661.1"/>
    <property type="molecule type" value="Genomic_DNA"/>
</dbReference>
<dbReference type="SMR" id="A4Y6S8"/>
<dbReference type="STRING" id="319224.Sputcn32_1938"/>
<dbReference type="KEGG" id="spc:Sputcn32_1938"/>
<dbReference type="eggNOG" id="COG0632">
    <property type="taxonomic scope" value="Bacteria"/>
</dbReference>
<dbReference type="HOGENOM" id="CLU_087936_0_0_6"/>
<dbReference type="GO" id="GO:0005737">
    <property type="term" value="C:cytoplasm"/>
    <property type="evidence" value="ECO:0007669"/>
    <property type="project" value="UniProtKB-SubCell"/>
</dbReference>
<dbReference type="GO" id="GO:0009379">
    <property type="term" value="C:Holliday junction helicase complex"/>
    <property type="evidence" value="ECO:0007669"/>
    <property type="project" value="InterPro"/>
</dbReference>
<dbReference type="GO" id="GO:0048476">
    <property type="term" value="C:Holliday junction resolvase complex"/>
    <property type="evidence" value="ECO:0007669"/>
    <property type="project" value="UniProtKB-UniRule"/>
</dbReference>
<dbReference type="GO" id="GO:0005524">
    <property type="term" value="F:ATP binding"/>
    <property type="evidence" value="ECO:0007669"/>
    <property type="project" value="InterPro"/>
</dbReference>
<dbReference type="GO" id="GO:0000400">
    <property type="term" value="F:four-way junction DNA binding"/>
    <property type="evidence" value="ECO:0007669"/>
    <property type="project" value="UniProtKB-UniRule"/>
</dbReference>
<dbReference type="GO" id="GO:0009378">
    <property type="term" value="F:four-way junction helicase activity"/>
    <property type="evidence" value="ECO:0007669"/>
    <property type="project" value="InterPro"/>
</dbReference>
<dbReference type="GO" id="GO:0006310">
    <property type="term" value="P:DNA recombination"/>
    <property type="evidence" value="ECO:0007669"/>
    <property type="project" value="UniProtKB-UniRule"/>
</dbReference>
<dbReference type="GO" id="GO:0006281">
    <property type="term" value="P:DNA repair"/>
    <property type="evidence" value="ECO:0007669"/>
    <property type="project" value="UniProtKB-UniRule"/>
</dbReference>
<dbReference type="CDD" id="cd14332">
    <property type="entry name" value="UBA_RuvA_C"/>
    <property type="match status" value="1"/>
</dbReference>
<dbReference type="Gene3D" id="1.10.150.20">
    <property type="entry name" value="5' to 3' exonuclease, C-terminal subdomain"/>
    <property type="match status" value="1"/>
</dbReference>
<dbReference type="Gene3D" id="1.10.8.10">
    <property type="entry name" value="DNA helicase RuvA subunit, C-terminal domain"/>
    <property type="match status" value="1"/>
</dbReference>
<dbReference type="Gene3D" id="2.40.50.140">
    <property type="entry name" value="Nucleic acid-binding proteins"/>
    <property type="match status" value="1"/>
</dbReference>
<dbReference type="HAMAP" id="MF_00031">
    <property type="entry name" value="DNA_HJ_migration_RuvA"/>
    <property type="match status" value="1"/>
</dbReference>
<dbReference type="InterPro" id="IPR013849">
    <property type="entry name" value="DNA_helicase_Holl-junc_RuvA_I"/>
</dbReference>
<dbReference type="InterPro" id="IPR003583">
    <property type="entry name" value="Hlx-hairpin-Hlx_DNA-bd_motif"/>
</dbReference>
<dbReference type="InterPro" id="IPR012340">
    <property type="entry name" value="NA-bd_OB-fold"/>
</dbReference>
<dbReference type="InterPro" id="IPR000085">
    <property type="entry name" value="RuvA"/>
</dbReference>
<dbReference type="InterPro" id="IPR010994">
    <property type="entry name" value="RuvA_2-like"/>
</dbReference>
<dbReference type="InterPro" id="IPR011114">
    <property type="entry name" value="RuvA_C"/>
</dbReference>
<dbReference type="InterPro" id="IPR036267">
    <property type="entry name" value="RuvA_C_sf"/>
</dbReference>
<dbReference type="NCBIfam" id="TIGR00084">
    <property type="entry name" value="ruvA"/>
    <property type="match status" value="1"/>
</dbReference>
<dbReference type="Pfam" id="PF14520">
    <property type="entry name" value="HHH_5"/>
    <property type="match status" value="1"/>
</dbReference>
<dbReference type="Pfam" id="PF07499">
    <property type="entry name" value="RuvA_C"/>
    <property type="match status" value="1"/>
</dbReference>
<dbReference type="Pfam" id="PF01330">
    <property type="entry name" value="RuvA_N"/>
    <property type="match status" value="1"/>
</dbReference>
<dbReference type="SMART" id="SM00278">
    <property type="entry name" value="HhH1"/>
    <property type="match status" value="2"/>
</dbReference>
<dbReference type="SUPFAM" id="SSF46929">
    <property type="entry name" value="DNA helicase RuvA subunit, C-terminal domain"/>
    <property type="match status" value="1"/>
</dbReference>
<dbReference type="SUPFAM" id="SSF50249">
    <property type="entry name" value="Nucleic acid-binding proteins"/>
    <property type="match status" value="1"/>
</dbReference>
<dbReference type="SUPFAM" id="SSF47781">
    <property type="entry name" value="RuvA domain 2-like"/>
    <property type="match status" value="1"/>
</dbReference>
<protein>
    <recommendedName>
        <fullName evidence="1">Holliday junction branch migration complex subunit RuvA</fullName>
    </recommendedName>
</protein>
<reference key="1">
    <citation type="submission" date="2007-04" db="EMBL/GenBank/DDBJ databases">
        <title>Complete sequence of Shewanella putrefaciens CN-32.</title>
        <authorList>
            <consortium name="US DOE Joint Genome Institute"/>
            <person name="Copeland A."/>
            <person name="Lucas S."/>
            <person name="Lapidus A."/>
            <person name="Barry K."/>
            <person name="Detter J.C."/>
            <person name="Glavina del Rio T."/>
            <person name="Hammon N."/>
            <person name="Israni S."/>
            <person name="Dalin E."/>
            <person name="Tice H."/>
            <person name="Pitluck S."/>
            <person name="Chain P."/>
            <person name="Malfatti S."/>
            <person name="Shin M."/>
            <person name="Vergez L."/>
            <person name="Schmutz J."/>
            <person name="Larimer F."/>
            <person name="Land M."/>
            <person name="Hauser L."/>
            <person name="Kyrpides N."/>
            <person name="Mikhailova N."/>
            <person name="Romine M.F."/>
            <person name="Fredrickson J."/>
            <person name="Tiedje J."/>
            <person name="Richardson P."/>
        </authorList>
    </citation>
    <scope>NUCLEOTIDE SEQUENCE [LARGE SCALE GENOMIC DNA]</scope>
    <source>
        <strain>CN-32 / ATCC BAA-453</strain>
    </source>
</reference>
<accession>A4Y6S8</accession>
<keyword id="KW-0963">Cytoplasm</keyword>
<keyword id="KW-0227">DNA damage</keyword>
<keyword id="KW-0233">DNA recombination</keyword>
<keyword id="KW-0234">DNA repair</keyword>
<keyword id="KW-0238">DNA-binding</keyword>
<feature type="chain" id="PRO_1000002551" description="Holliday junction branch migration complex subunit RuvA">
    <location>
        <begin position="1"/>
        <end position="205"/>
    </location>
</feature>
<feature type="region of interest" description="Domain I" evidence="1">
    <location>
        <begin position="1"/>
        <end position="64"/>
    </location>
</feature>
<feature type="region of interest" description="Domain II" evidence="1">
    <location>
        <begin position="65"/>
        <end position="143"/>
    </location>
</feature>
<feature type="region of interest" description="Flexible linker" evidence="1">
    <location>
        <begin position="144"/>
        <end position="156"/>
    </location>
</feature>
<feature type="region of interest" description="Domain III" evidence="1">
    <location>
        <begin position="157"/>
        <end position="205"/>
    </location>
</feature>
<evidence type="ECO:0000255" key="1">
    <source>
        <dbReference type="HAMAP-Rule" id="MF_00031"/>
    </source>
</evidence>
<comment type="function">
    <text evidence="1">The RuvA-RuvB-RuvC complex processes Holliday junction (HJ) DNA during genetic recombination and DNA repair, while the RuvA-RuvB complex plays an important role in the rescue of blocked DNA replication forks via replication fork reversal (RFR). RuvA specifically binds to HJ cruciform DNA, conferring on it an open structure. The RuvB hexamer acts as an ATP-dependent pump, pulling dsDNA into and through the RuvAB complex. HJ branch migration allows RuvC to scan DNA until it finds its consensus sequence, where it cleaves and resolves the cruciform DNA.</text>
</comment>
<comment type="subunit">
    <text evidence="1">Homotetramer. Forms an RuvA(8)-RuvB(12)-Holliday junction (HJ) complex. HJ DNA is sandwiched between 2 RuvA tetramers; dsDNA enters through RuvA and exits via RuvB. An RuvB hexamer assembles on each DNA strand where it exits the tetramer. Each RuvB hexamer is contacted by two RuvA subunits (via domain III) on 2 adjacent RuvB subunits; this complex drives branch migration. In the full resolvosome a probable DNA-RuvA(4)-RuvB(12)-RuvC(2) complex forms which resolves the HJ.</text>
</comment>
<comment type="subcellular location">
    <subcellularLocation>
        <location evidence="1">Cytoplasm</location>
    </subcellularLocation>
</comment>
<comment type="domain">
    <text evidence="1">Has three domains with a flexible linker between the domains II and III and assumes an 'L' shape. Domain III is highly mobile and contacts RuvB.</text>
</comment>
<comment type="similarity">
    <text evidence="1">Belongs to the RuvA family.</text>
</comment>
<organism>
    <name type="scientific">Shewanella putrefaciens (strain CN-32 / ATCC BAA-453)</name>
    <dbReference type="NCBI Taxonomy" id="319224"/>
    <lineage>
        <taxon>Bacteria</taxon>
        <taxon>Pseudomonadati</taxon>
        <taxon>Pseudomonadota</taxon>
        <taxon>Gammaproteobacteria</taxon>
        <taxon>Alteromonadales</taxon>
        <taxon>Shewanellaceae</taxon>
        <taxon>Shewanella</taxon>
    </lineage>
</organism>
<sequence>MIGRLRGVLVEKQAPEILMDVNGVGYELQMPLTSFYELPEIDHETVVYTHFVVREDAQLLYGFITKQERALFRLLIKTNGVGPKLALTILSGMTASEFVGCVERDDIVTLVKLPGVGKKTAERLLVEMRDKLKSLMEASAGSEREFVLQSNYSPTPTVNSAEEDAISALISLGYKPPQASKSVSAAYKEGMDSETLIKAALKSML</sequence>
<name>RUVA_SHEPC</name>
<proteinExistence type="inferred from homology"/>